<dbReference type="EC" id="1.5.1.5" evidence="1"/>
<dbReference type="EC" id="3.5.4.9" evidence="1"/>
<dbReference type="EMBL" id="CU633749">
    <property type="protein sequence ID" value="CAQ69249.1"/>
    <property type="molecule type" value="Genomic_DNA"/>
</dbReference>
<dbReference type="RefSeq" id="WP_012352575.1">
    <property type="nucleotide sequence ID" value="NC_010528.1"/>
</dbReference>
<dbReference type="SMR" id="B3R4L6"/>
<dbReference type="GeneID" id="29761311"/>
<dbReference type="KEGG" id="cti:RALTA_A1289"/>
<dbReference type="eggNOG" id="COG0190">
    <property type="taxonomic scope" value="Bacteria"/>
</dbReference>
<dbReference type="HOGENOM" id="CLU_034045_2_1_4"/>
<dbReference type="BioCyc" id="CTAI977880:RALTA_RS06175-MONOMER"/>
<dbReference type="UniPathway" id="UPA00193"/>
<dbReference type="Proteomes" id="UP000001692">
    <property type="component" value="Chromosome 1"/>
</dbReference>
<dbReference type="GO" id="GO:0005829">
    <property type="term" value="C:cytosol"/>
    <property type="evidence" value="ECO:0007669"/>
    <property type="project" value="TreeGrafter"/>
</dbReference>
<dbReference type="GO" id="GO:0004477">
    <property type="term" value="F:methenyltetrahydrofolate cyclohydrolase activity"/>
    <property type="evidence" value="ECO:0007669"/>
    <property type="project" value="UniProtKB-UniRule"/>
</dbReference>
<dbReference type="GO" id="GO:0004488">
    <property type="term" value="F:methylenetetrahydrofolate dehydrogenase (NADP+) activity"/>
    <property type="evidence" value="ECO:0007669"/>
    <property type="project" value="UniProtKB-UniRule"/>
</dbReference>
<dbReference type="GO" id="GO:0000105">
    <property type="term" value="P:L-histidine biosynthetic process"/>
    <property type="evidence" value="ECO:0007669"/>
    <property type="project" value="UniProtKB-KW"/>
</dbReference>
<dbReference type="GO" id="GO:0009086">
    <property type="term" value="P:methionine biosynthetic process"/>
    <property type="evidence" value="ECO:0007669"/>
    <property type="project" value="UniProtKB-KW"/>
</dbReference>
<dbReference type="GO" id="GO:0006164">
    <property type="term" value="P:purine nucleotide biosynthetic process"/>
    <property type="evidence" value="ECO:0007669"/>
    <property type="project" value="UniProtKB-KW"/>
</dbReference>
<dbReference type="GO" id="GO:0035999">
    <property type="term" value="P:tetrahydrofolate interconversion"/>
    <property type="evidence" value="ECO:0007669"/>
    <property type="project" value="UniProtKB-UniRule"/>
</dbReference>
<dbReference type="CDD" id="cd01080">
    <property type="entry name" value="NAD_bind_m-THF_DH_Cyclohyd"/>
    <property type="match status" value="1"/>
</dbReference>
<dbReference type="FunFam" id="3.40.50.720:FF:000094">
    <property type="entry name" value="Bifunctional protein FolD"/>
    <property type="match status" value="1"/>
</dbReference>
<dbReference type="FunFam" id="3.40.50.10860:FF:000005">
    <property type="entry name" value="C-1-tetrahydrofolate synthase, cytoplasmic, putative"/>
    <property type="match status" value="1"/>
</dbReference>
<dbReference type="Gene3D" id="3.40.50.10860">
    <property type="entry name" value="Leucine Dehydrogenase, chain A, domain 1"/>
    <property type="match status" value="1"/>
</dbReference>
<dbReference type="Gene3D" id="3.40.50.720">
    <property type="entry name" value="NAD(P)-binding Rossmann-like Domain"/>
    <property type="match status" value="1"/>
</dbReference>
<dbReference type="HAMAP" id="MF_01576">
    <property type="entry name" value="THF_DHG_CYH"/>
    <property type="match status" value="1"/>
</dbReference>
<dbReference type="InterPro" id="IPR046346">
    <property type="entry name" value="Aminoacid_DH-like_N_sf"/>
</dbReference>
<dbReference type="InterPro" id="IPR036291">
    <property type="entry name" value="NAD(P)-bd_dom_sf"/>
</dbReference>
<dbReference type="InterPro" id="IPR000672">
    <property type="entry name" value="THF_DH/CycHdrlase"/>
</dbReference>
<dbReference type="InterPro" id="IPR020630">
    <property type="entry name" value="THF_DH/CycHdrlase_cat_dom"/>
</dbReference>
<dbReference type="InterPro" id="IPR020867">
    <property type="entry name" value="THF_DH/CycHdrlase_CS"/>
</dbReference>
<dbReference type="InterPro" id="IPR020631">
    <property type="entry name" value="THF_DH/CycHdrlase_NAD-bd_dom"/>
</dbReference>
<dbReference type="NCBIfam" id="NF008058">
    <property type="entry name" value="PRK10792.1"/>
    <property type="match status" value="1"/>
</dbReference>
<dbReference type="NCBIfam" id="NF010783">
    <property type="entry name" value="PRK14186.1"/>
    <property type="match status" value="1"/>
</dbReference>
<dbReference type="NCBIfam" id="NF010786">
    <property type="entry name" value="PRK14189.1"/>
    <property type="match status" value="1"/>
</dbReference>
<dbReference type="PANTHER" id="PTHR48099:SF5">
    <property type="entry name" value="C-1-TETRAHYDROFOLATE SYNTHASE, CYTOPLASMIC"/>
    <property type="match status" value="1"/>
</dbReference>
<dbReference type="PANTHER" id="PTHR48099">
    <property type="entry name" value="C-1-TETRAHYDROFOLATE SYNTHASE, CYTOPLASMIC-RELATED"/>
    <property type="match status" value="1"/>
</dbReference>
<dbReference type="Pfam" id="PF00763">
    <property type="entry name" value="THF_DHG_CYH"/>
    <property type="match status" value="1"/>
</dbReference>
<dbReference type="Pfam" id="PF02882">
    <property type="entry name" value="THF_DHG_CYH_C"/>
    <property type="match status" value="1"/>
</dbReference>
<dbReference type="PRINTS" id="PR00085">
    <property type="entry name" value="THFDHDRGNASE"/>
</dbReference>
<dbReference type="SUPFAM" id="SSF53223">
    <property type="entry name" value="Aminoacid dehydrogenase-like, N-terminal domain"/>
    <property type="match status" value="1"/>
</dbReference>
<dbReference type="SUPFAM" id="SSF51735">
    <property type="entry name" value="NAD(P)-binding Rossmann-fold domains"/>
    <property type="match status" value="1"/>
</dbReference>
<dbReference type="PROSITE" id="PS00766">
    <property type="entry name" value="THF_DHG_CYH_1"/>
    <property type="match status" value="1"/>
</dbReference>
<dbReference type="PROSITE" id="PS00767">
    <property type="entry name" value="THF_DHG_CYH_2"/>
    <property type="match status" value="1"/>
</dbReference>
<keyword id="KW-0028">Amino-acid biosynthesis</keyword>
<keyword id="KW-0368">Histidine biosynthesis</keyword>
<keyword id="KW-0378">Hydrolase</keyword>
<keyword id="KW-0486">Methionine biosynthesis</keyword>
<keyword id="KW-0511">Multifunctional enzyme</keyword>
<keyword id="KW-0521">NADP</keyword>
<keyword id="KW-0554">One-carbon metabolism</keyword>
<keyword id="KW-0560">Oxidoreductase</keyword>
<keyword id="KW-0658">Purine biosynthesis</keyword>
<protein>
    <recommendedName>
        <fullName evidence="1">Bifunctional protein FolD</fullName>
    </recommendedName>
    <domain>
        <recommendedName>
            <fullName evidence="1">Methylenetetrahydrofolate dehydrogenase</fullName>
            <ecNumber evidence="1">1.5.1.5</ecNumber>
        </recommendedName>
    </domain>
    <domain>
        <recommendedName>
            <fullName evidence="1">Methenyltetrahydrofolate cyclohydrolase</fullName>
            <ecNumber evidence="1">3.5.4.9</ecNumber>
        </recommendedName>
    </domain>
</protein>
<sequence length="283" mass="29990">MPAQLIDGNALAKQIRSEAAQRAARLTERGHQPGLAVVLVGEDPASQVYVRNKVKACEDNGFHSSLDRYPADLSEADLLARIDELNRDPRIHGILVQLPLPKHIDSHKVLEAIAPEKDVDGFHVANAGALMTGAPLFRPCTPYGCMKMLESIQYPLRGARAVVVGASNIVGKPMAMLLLQGGATVTICNSKTRDIGAHTRDADVVVAAVGKRNLITADMVKPGAVVIDVGMNRDDHGKLCGDVDFAGVREVAGYITPVPGGVGPMTITMLLINTLEAAERAAG</sequence>
<name>FOLD_CUPTR</name>
<comment type="function">
    <text evidence="1">Catalyzes the oxidation of 5,10-methylenetetrahydrofolate to 5,10-methenyltetrahydrofolate and then the hydrolysis of 5,10-methenyltetrahydrofolate to 10-formyltetrahydrofolate.</text>
</comment>
<comment type="catalytic activity">
    <reaction evidence="1">
        <text>(6R)-5,10-methylene-5,6,7,8-tetrahydrofolate + NADP(+) = (6R)-5,10-methenyltetrahydrofolate + NADPH</text>
        <dbReference type="Rhea" id="RHEA:22812"/>
        <dbReference type="ChEBI" id="CHEBI:15636"/>
        <dbReference type="ChEBI" id="CHEBI:57455"/>
        <dbReference type="ChEBI" id="CHEBI:57783"/>
        <dbReference type="ChEBI" id="CHEBI:58349"/>
        <dbReference type="EC" id="1.5.1.5"/>
    </reaction>
</comment>
<comment type="catalytic activity">
    <reaction evidence="1">
        <text>(6R)-5,10-methenyltetrahydrofolate + H2O = (6R)-10-formyltetrahydrofolate + H(+)</text>
        <dbReference type="Rhea" id="RHEA:23700"/>
        <dbReference type="ChEBI" id="CHEBI:15377"/>
        <dbReference type="ChEBI" id="CHEBI:15378"/>
        <dbReference type="ChEBI" id="CHEBI:57455"/>
        <dbReference type="ChEBI" id="CHEBI:195366"/>
        <dbReference type="EC" id="3.5.4.9"/>
    </reaction>
</comment>
<comment type="pathway">
    <text evidence="1">One-carbon metabolism; tetrahydrofolate interconversion.</text>
</comment>
<comment type="subunit">
    <text evidence="1">Homodimer.</text>
</comment>
<comment type="similarity">
    <text evidence="1">Belongs to the tetrahydrofolate dehydrogenase/cyclohydrolase family.</text>
</comment>
<gene>
    <name evidence="1" type="primary">folD</name>
    <name type="ordered locus">RALTA_A1289</name>
</gene>
<reference key="1">
    <citation type="journal article" date="2008" name="Genome Res.">
        <title>Genome sequence of the beta-rhizobium Cupriavidus taiwanensis and comparative genomics of rhizobia.</title>
        <authorList>
            <person name="Amadou C."/>
            <person name="Pascal G."/>
            <person name="Mangenot S."/>
            <person name="Glew M."/>
            <person name="Bontemps C."/>
            <person name="Capela D."/>
            <person name="Carrere S."/>
            <person name="Cruveiller S."/>
            <person name="Dossat C."/>
            <person name="Lajus A."/>
            <person name="Marchetti M."/>
            <person name="Poinsot V."/>
            <person name="Rouy Z."/>
            <person name="Servin B."/>
            <person name="Saad M."/>
            <person name="Schenowitz C."/>
            <person name="Barbe V."/>
            <person name="Batut J."/>
            <person name="Medigue C."/>
            <person name="Masson-Boivin C."/>
        </authorList>
    </citation>
    <scope>NUCLEOTIDE SEQUENCE [LARGE SCALE GENOMIC DNA]</scope>
    <source>
        <strain>DSM 17343 / BCRC 17206 / CCUG 44338 / CIP 107171 / LMG 19424 / R1</strain>
    </source>
</reference>
<accession>B3R4L6</accession>
<proteinExistence type="inferred from homology"/>
<organism>
    <name type="scientific">Cupriavidus taiwanensis (strain DSM 17343 / BCRC 17206 / CCUG 44338 / CIP 107171 / LMG 19424 / R1)</name>
    <name type="common">Ralstonia taiwanensis (strain LMG 19424)</name>
    <dbReference type="NCBI Taxonomy" id="977880"/>
    <lineage>
        <taxon>Bacteria</taxon>
        <taxon>Pseudomonadati</taxon>
        <taxon>Pseudomonadota</taxon>
        <taxon>Betaproteobacteria</taxon>
        <taxon>Burkholderiales</taxon>
        <taxon>Burkholderiaceae</taxon>
        <taxon>Cupriavidus</taxon>
    </lineage>
</organism>
<evidence type="ECO:0000255" key="1">
    <source>
        <dbReference type="HAMAP-Rule" id="MF_01576"/>
    </source>
</evidence>
<feature type="chain" id="PRO_1000196760" description="Bifunctional protein FolD">
    <location>
        <begin position="1"/>
        <end position="283"/>
    </location>
</feature>
<feature type="binding site" evidence="1">
    <location>
        <begin position="165"/>
        <end position="167"/>
    </location>
    <ligand>
        <name>NADP(+)</name>
        <dbReference type="ChEBI" id="CHEBI:58349"/>
    </ligand>
</feature>
<feature type="binding site" evidence="1">
    <location>
        <position position="190"/>
    </location>
    <ligand>
        <name>NADP(+)</name>
        <dbReference type="ChEBI" id="CHEBI:58349"/>
    </ligand>
</feature>